<organism>
    <name type="scientific">Leuconostoc citreum (strain KM20)</name>
    <dbReference type="NCBI Taxonomy" id="349519"/>
    <lineage>
        <taxon>Bacteria</taxon>
        <taxon>Bacillati</taxon>
        <taxon>Bacillota</taxon>
        <taxon>Bacilli</taxon>
        <taxon>Lactobacillales</taxon>
        <taxon>Lactobacillaceae</taxon>
        <taxon>Leuconostoc</taxon>
    </lineage>
</organism>
<evidence type="ECO:0000255" key="1">
    <source>
        <dbReference type="HAMAP-Rule" id="MF_01322"/>
    </source>
</evidence>
<evidence type="ECO:0000256" key="2">
    <source>
        <dbReference type="SAM" id="MobiDB-lite"/>
    </source>
</evidence>
<evidence type="ECO:0000305" key="3"/>
<proteinExistence type="inferred from homology"/>
<sequence>MAIDVNKFESMQIGLASPDKIRSWSYGEVKKPETINYRTLKPEKDGLFDERIFGPTKDYECACGKYKRIRYKGIVCDRCGVEVTSSKVRRERMGHIELAAPVTHIWYFKGIPSRMGLVLDMSPRSLEEIIYFASYVVIEPGDAPVEKKQLMTEREYRELKREYGASFKAGMGAEAIKDLLASVDLAAEADQLKRELQEATGQKRVRAVRRLDIIEAFLQSDNKPQWMVMDVIPVIPPDLRPMVQLEGGRFATSDLNDLYRRVINRNNRLKRLLDLNAPGIIVQNEKRMLQEAVDALIDNGRRGRPVAGPGNRPLKSLSHMLKGKQGRFRQNLLGKRVDYSGRSVIDVGPFLKMNQMGLPRPMAIELFRPFIMKELTTRKLAGNVKSAKRKIDKADEDVMDVLEDVIKEHPVLLNRAPTLHRLGIQAFEPVLVSGKAMRLHPLVTEAYNADFDGDQMAIHVPLSDEAQAEARLLMLAAGHILAPKDGKPIVAPSQDMVIGNYYLTTEEAGREGEGMIFSSVEEAKIAFASKVVHYHTRIGIQTSSFPEAKPFTDEQRSKIMVTSVGKLIFNEILPVDFPYINEPSEDNFKGISDQFFIEPGEDIHDYLADTAVIGAFKKGFLSDVIAEVYKRYKVTETSLLLDRMKDLGYEKSTESGLTVSMNDVTELTEKPAILEDAHKQVATVTKQFRRGLITDSERYQRVTEIWTKAKDVIQDKLIASFEPTNPIFMMQDSGARGNISNFVQLAGMRGLMAGPGGKIIELPVTANFREGLTVMEMFISTHGARKGMSDTALKTANSGYLTRRLVDVAQDVIVREWNNNADRGVAVKAIMDGTSVVEPLYDRILGRYAMKSVFNPETGDKLVSRNEMIDEDVAKAIVAAGIEEVTIRSVFTSTTEHGVSVLDYGRNLATGEEVEVGEAVGTVAAQSIGEPGTQLTMRNFHTGGVAGGNDITQGLPRVQEIVEARIPKGRAEISEVTGTVVAIEENPAERTKAVTIEGETDTRTYTLPLAARMRFAEGDDIQRGDAINEGPIDPKELLAVTDTLTTESYMLTEIQKVYRLQGIEVSDKHIEVMIRQMLRKVRVMDPGETSLLPGMLMDIADFQRANEPALFDGLVPATARPVLLGITKAALETNSFLSAASFQETTRVLTDAAIRGKNDPLVGLKENVIIGKIIPAGTGMAEYRKIKSKVVGEVVAQPEVEQEPTPDIPKLDDVAKSFEE</sequence>
<protein>
    <recommendedName>
        <fullName evidence="1">DNA-directed RNA polymerase subunit beta'</fullName>
        <shortName evidence="1">RNAP subunit beta'</shortName>
        <ecNumber evidence="1">2.7.7.6</ecNumber>
    </recommendedName>
    <alternativeName>
        <fullName evidence="1">RNA polymerase subunit beta'</fullName>
    </alternativeName>
    <alternativeName>
        <fullName evidence="1">Transcriptase subunit beta'</fullName>
    </alternativeName>
</protein>
<keyword id="KW-0240">DNA-directed RNA polymerase</keyword>
<keyword id="KW-0460">Magnesium</keyword>
<keyword id="KW-0479">Metal-binding</keyword>
<keyword id="KW-0548">Nucleotidyltransferase</keyword>
<keyword id="KW-1185">Reference proteome</keyword>
<keyword id="KW-0804">Transcription</keyword>
<keyword id="KW-0808">Transferase</keyword>
<keyword id="KW-0862">Zinc</keyword>
<comment type="function">
    <text evidence="1">DNA-dependent RNA polymerase catalyzes the transcription of DNA into RNA using the four ribonucleoside triphosphates as substrates.</text>
</comment>
<comment type="catalytic activity">
    <reaction evidence="1">
        <text>RNA(n) + a ribonucleoside 5'-triphosphate = RNA(n+1) + diphosphate</text>
        <dbReference type="Rhea" id="RHEA:21248"/>
        <dbReference type="Rhea" id="RHEA-COMP:14527"/>
        <dbReference type="Rhea" id="RHEA-COMP:17342"/>
        <dbReference type="ChEBI" id="CHEBI:33019"/>
        <dbReference type="ChEBI" id="CHEBI:61557"/>
        <dbReference type="ChEBI" id="CHEBI:140395"/>
        <dbReference type="EC" id="2.7.7.6"/>
    </reaction>
</comment>
<comment type="cofactor">
    <cofactor evidence="1">
        <name>Mg(2+)</name>
        <dbReference type="ChEBI" id="CHEBI:18420"/>
    </cofactor>
    <text evidence="1">Binds 1 Mg(2+) ion per subunit.</text>
</comment>
<comment type="cofactor">
    <cofactor evidence="1">
        <name>Zn(2+)</name>
        <dbReference type="ChEBI" id="CHEBI:29105"/>
    </cofactor>
    <text evidence="3">Binds 1 Zn(2+) ion per subunit; 2 are expected compared to other organisms.</text>
</comment>
<comment type="subunit">
    <text evidence="1">The RNAP catalytic core consists of 2 alpha, 1 beta, 1 beta' and 1 omega subunit. When a sigma factor is associated with the core the holoenzyme is formed, which can initiate transcription.</text>
</comment>
<comment type="similarity">
    <text evidence="1">Belongs to the RNA polymerase beta' chain family.</text>
</comment>
<accession>B1MVW7</accession>
<name>RPOC_LEUCK</name>
<feature type="chain" id="PRO_0000353387" description="DNA-directed RNA polymerase subunit beta'">
    <location>
        <begin position="1"/>
        <end position="1220"/>
    </location>
</feature>
<feature type="region of interest" description="Disordered" evidence="2">
    <location>
        <begin position="1197"/>
        <end position="1220"/>
    </location>
</feature>
<feature type="compositionally biased region" description="Basic and acidic residues" evidence="2">
    <location>
        <begin position="1209"/>
        <end position="1220"/>
    </location>
</feature>
<feature type="binding site" evidence="1">
    <location>
        <position position="61"/>
    </location>
    <ligand>
        <name>Zn(2+)</name>
        <dbReference type="ChEBI" id="CHEBI:29105"/>
    </ligand>
</feature>
<feature type="binding site" evidence="1">
    <location>
        <position position="63"/>
    </location>
    <ligand>
        <name>Zn(2+)</name>
        <dbReference type="ChEBI" id="CHEBI:29105"/>
    </ligand>
</feature>
<feature type="binding site" evidence="1">
    <location>
        <position position="76"/>
    </location>
    <ligand>
        <name>Zn(2+)</name>
        <dbReference type="ChEBI" id="CHEBI:29105"/>
    </ligand>
</feature>
<feature type="binding site" evidence="1">
    <location>
        <position position="79"/>
    </location>
    <ligand>
        <name>Zn(2+)</name>
        <dbReference type="ChEBI" id="CHEBI:29105"/>
    </ligand>
</feature>
<feature type="binding site" evidence="1">
    <location>
        <position position="450"/>
    </location>
    <ligand>
        <name>Mg(2+)</name>
        <dbReference type="ChEBI" id="CHEBI:18420"/>
    </ligand>
</feature>
<feature type="binding site" evidence="1">
    <location>
        <position position="452"/>
    </location>
    <ligand>
        <name>Mg(2+)</name>
        <dbReference type="ChEBI" id="CHEBI:18420"/>
    </ligand>
</feature>
<feature type="binding site" evidence="1">
    <location>
        <position position="454"/>
    </location>
    <ligand>
        <name>Mg(2+)</name>
        <dbReference type="ChEBI" id="CHEBI:18420"/>
    </ligand>
</feature>
<gene>
    <name evidence="1" type="primary">rpoC</name>
    <name type="ordered locus">LCK_01547</name>
</gene>
<dbReference type="EC" id="2.7.7.6" evidence="1"/>
<dbReference type="EMBL" id="DQ489736">
    <property type="protein sequence ID" value="ACA83371.1"/>
    <property type="molecule type" value="Genomic_DNA"/>
</dbReference>
<dbReference type="RefSeq" id="WP_012305432.1">
    <property type="nucleotide sequence ID" value="NC_010471.1"/>
</dbReference>
<dbReference type="SMR" id="B1MVW7"/>
<dbReference type="STRING" id="349519.LCK_01547"/>
<dbReference type="KEGG" id="lci:LCK_01547"/>
<dbReference type="eggNOG" id="COG0086">
    <property type="taxonomic scope" value="Bacteria"/>
</dbReference>
<dbReference type="HOGENOM" id="CLU_000524_3_1_9"/>
<dbReference type="OrthoDB" id="9815296at2"/>
<dbReference type="Proteomes" id="UP000002166">
    <property type="component" value="Chromosome"/>
</dbReference>
<dbReference type="GO" id="GO:0000428">
    <property type="term" value="C:DNA-directed RNA polymerase complex"/>
    <property type="evidence" value="ECO:0007669"/>
    <property type="project" value="UniProtKB-KW"/>
</dbReference>
<dbReference type="GO" id="GO:0003677">
    <property type="term" value="F:DNA binding"/>
    <property type="evidence" value="ECO:0007669"/>
    <property type="project" value="UniProtKB-UniRule"/>
</dbReference>
<dbReference type="GO" id="GO:0003899">
    <property type="term" value="F:DNA-directed RNA polymerase activity"/>
    <property type="evidence" value="ECO:0007669"/>
    <property type="project" value="UniProtKB-UniRule"/>
</dbReference>
<dbReference type="GO" id="GO:0000287">
    <property type="term" value="F:magnesium ion binding"/>
    <property type="evidence" value="ECO:0007669"/>
    <property type="project" value="UniProtKB-UniRule"/>
</dbReference>
<dbReference type="GO" id="GO:0008270">
    <property type="term" value="F:zinc ion binding"/>
    <property type="evidence" value="ECO:0007669"/>
    <property type="project" value="UniProtKB-UniRule"/>
</dbReference>
<dbReference type="GO" id="GO:0006351">
    <property type="term" value="P:DNA-templated transcription"/>
    <property type="evidence" value="ECO:0007669"/>
    <property type="project" value="UniProtKB-UniRule"/>
</dbReference>
<dbReference type="CDD" id="cd02655">
    <property type="entry name" value="RNAP_beta'_C"/>
    <property type="match status" value="1"/>
</dbReference>
<dbReference type="CDD" id="cd01609">
    <property type="entry name" value="RNAP_beta'_N"/>
    <property type="match status" value="1"/>
</dbReference>
<dbReference type="FunFam" id="1.10.150.390:FF:000002">
    <property type="entry name" value="DNA-directed RNA polymerase subunit beta"/>
    <property type="match status" value="1"/>
</dbReference>
<dbReference type="FunFam" id="4.10.860.120:FF:000001">
    <property type="entry name" value="DNA-directed RNA polymerase subunit beta"/>
    <property type="match status" value="1"/>
</dbReference>
<dbReference type="Gene3D" id="1.10.132.30">
    <property type="match status" value="1"/>
</dbReference>
<dbReference type="Gene3D" id="1.10.150.390">
    <property type="match status" value="1"/>
</dbReference>
<dbReference type="Gene3D" id="1.10.1790.20">
    <property type="match status" value="1"/>
</dbReference>
<dbReference type="Gene3D" id="1.10.40.90">
    <property type="match status" value="1"/>
</dbReference>
<dbReference type="Gene3D" id="2.40.40.20">
    <property type="match status" value="1"/>
</dbReference>
<dbReference type="Gene3D" id="2.40.50.100">
    <property type="match status" value="1"/>
</dbReference>
<dbReference type="Gene3D" id="4.10.860.120">
    <property type="entry name" value="RNA polymerase II, clamp domain"/>
    <property type="match status" value="1"/>
</dbReference>
<dbReference type="Gene3D" id="1.10.274.100">
    <property type="entry name" value="RNA polymerase Rpb1, domain 3"/>
    <property type="match status" value="2"/>
</dbReference>
<dbReference type="HAMAP" id="MF_01322">
    <property type="entry name" value="RNApol_bact_RpoC"/>
    <property type="match status" value="1"/>
</dbReference>
<dbReference type="InterPro" id="IPR045867">
    <property type="entry name" value="DNA-dir_RpoC_beta_prime"/>
</dbReference>
<dbReference type="InterPro" id="IPR012754">
    <property type="entry name" value="DNA-dir_RpoC_beta_prime_bact"/>
</dbReference>
<dbReference type="InterPro" id="IPR000722">
    <property type="entry name" value="RNA_pol_asu"/>
</dbReference>
<dbReference type="InterPro" id="IPR006592">
    <property type="entry name" value="RNA_pol_N"/>
</dbReference>
<dbReference type="InterPro" id="IPR007080">
    <property type="entry name" value="RNA_pol_Rpb1_1"/>
</dbReference>
<dbReference type="InterPro" id="IPR007066">
    <property type="entry name" value="RNA_pol_Rpb1_3"/>
</dbReference>
<dbReference type="InterPro" id="IPR042102">
    <property type="entry name" value="RNA_pol_Rpb1_3_sf"/>
</dbReference>
<dbReference type="InterPro" id="IPR007083">
    <property type="entry name" value="RNA_pol_Rpb1_4"/>
</dbReference>
<dbReference type="InterPro" id="IPR007081">
    <property type="entry name" value="RNA_pol_Rpb1_5"/>
</dbReference>
<dbReference type="InterPro" id="IPR044893">
    <property type="entry name" value="RNA_pol_Rpb1_clamp_domain"/>
</dbReference>
<dbReference type="InterPro" id="IPR038120">
    <property type="entry name" value="Rpb1_funnel_sf"/>
</dbReference>
<dbReference type="NCBIfam" id="TIGR02386">
    <property type="entry name" value="rpoC_TIGR"/>
    <property type="match status" value="1"/>
</dbReference>
<dbReference type="PANTHER" id="PTHR19376">
    <property type="entry name" value="DNA-DIRECTED RNA POLYMERASE"/>
    <property type="match status" value="1"/>
</dbReference>
<dbReference type="PANTHER" id="PTHR19376:SF54">
    <property type="entry name" value="DNA-DIRECTED RNA POLYMERASE SUBUNIT BETA"/>
    <property type="match status" value="1"/>
</dbReference>
<dbReference type="Pfam" id="PF04997">
    <property type="entry name" value="RNA_pol_Rpb1_1"/>
    <property type="match status" value="1"/>
</dbReference>
<dbReference type="Pfam" id="PF00623">
    <property type="entry name" value="RNA_pol_Rpb1_2"/>
    <property type="match status" value="2"/>
</dbReference>
<dbReference type="Pfam" id="PF04983">
    <property type="entry name" value="RNA_pol_Rpb1_3"/>
    <property type="match status" value="1"/>
</dbReference>
<dbReference type="Pfam" id="PF05000">
    <property type="entry name" value="RNA_pol_Rpb1_4"/>
    <property type="match status" value="1"/>
</dbReference>
<dbReference type="Pfam" id="PF04998">
    <property type="entry name" value="RNA_pol_Rpb1_5"/>
    <property type="match status" value="1"/>
</dbReference>
<dbReference type="SMART" id="SM00663">
    <property type="entry name" value="RPOLA_N"/>
    <property type="match status" value="1"/>
</dbReference>
<dbReference type="SUPFAM" id="SSF64484">
    <property type="entry name" value="beta and beta-prime subunits of DNA dependent RNA-polymerase"/>
    <property type="match status" value="1"/>
</dbReference>
<reference key="1">
    <citation type="journal article" date="2008" name="J. Bacteriol.">
        <title>Complete genome sequence of Leuconostoc citreum KM20.</title>
        <authorList>
            <person name="Kim J.F."/>
            <person name="Jeong H."/>
            <person name="Lee J.-S."/>
            <person name="Choi S.-H."/>
            <person name="Ha M."/>
            <person name="Hur C.-G."/>
            <person name="Kim J.-S."/>
            <person name="Lee S."/>
            <person name="Park H.-S."/>
            <person name="Park Y.-H."/>
            <person name="Oh T.K."/>
        </authorList>
    </citation>
    <scope>NUCLEOTIDE SEQUENCE [LARGE SCALE GENOMIC DNA]</scope>
    <source>
        <strain>KM20</strain>
    </source>
</reference>